<sequence length="403" mass="47166">MTGEEWGLTVLSFLVRVGFFLFGIYQDANFKVRYTDIDYFVFHDAAKYVYEGKSPYARDTYRYTPLLSWLLVPNHYFGWFHLGKVIFVIFDLVTGLIIMKLLNQAISRKRALILESIWLLNPMVITISTRGNAESVLCCLIMFTLFFLQKSRYTLAGILYGLSIHFKIYPIIYCIPIAIFIYYNKRNQGPRTQLTSLLNIGLSTLTTLLGCGWAMYKIYGYEFLDQAYLYHLYRTDHRHNFSVWNMLLYLDSANKENGESNLSRYAFVPQLLLVLVTGCLEWWNPTFDNLLRVLFVQTFAFVTYNKVCTSQYFVWYLIFLPFYLSRTHIGWKKGLLMATLWVGTQGIWLSQGYYLEFEGKNVFYPGLFIASVLFFVTNVWLLGQFITDIKIPTQPTVSNKKNN</sequence>
<gene>
    <name type="primary">GPI14</name>
    <name type="synonym">PMH1</name>
    <name type="ordered locus">YJR013W</name>
    <name type="ORF">J1444</name>
    <name type="ORF">YJR83.11</name>
</gene>
<dbReference type="EC" id="2.4.1.-"/>
<dbReference type="EMBL" id="X87611">
    <property type="protein sequence ID" value="CAA60935.1"/>
    <property type="status" value="ALT_FRAME"/>
    <property type="molecule type" value="Genomic_DNA"/>
</dbReference>
<dbReference type="EMBL" id="Z49513">
    <property type="protein sequence ID" value="CAA89537.1"/>
    <property type="status" value="ALT_FRAME"/>
    <property type="molecule type" value="Genomic_DNA"/>
</dbReference>
<dbReference type="EMBL" id="AY260895">
    <property type="protein sequence ID" value="AAP21763.1"/>
    <property type="molecule type" value="Genomic_DNA"/>
</dbReference>
<dbReference type="EMBL" id="AY557910">
    <property type="protein sequence ID" value="AAS56236.1"/>
    <property type="molecule type" value="Genomic_DNA"/>
</dbReference>
<dbReference type="EMBL" id="BK006943">
    <property type="protein sequence ID" value="DAA08805.1"/>
    <property type="molecule type" value="Genomic_DNA"/>
</dbReference>
<dbReference type="PIR" id="S55201">
    <property type="entry name" value="S55201"/>
</dbReference>
<dbReference type="RefSeq" id="NP_012547.2">
    <property type="nucleotide sequence ID" value="NM_001181671.1"/>
</dbReference>
<dbReference type="SMR" id="P47088"/>
<dbReference type="BioGRID" id="33769">
    <property type="interactions" value="170"/>
</dbReference>
<dbReference type="ComplexPortal" id="CPX-1270">
    <property type="entry name" value="Glycosylphosphatidylinositol-mannosyltransferase I complex"/>
</dbReference>
<dbReference type="FunCoup" id="P47088">
    <property type="interactions" value="685"/>
</dbReference>
<dbReference type="IntAct" id="P47088">
    <property type="interactions" value="57"/>
</dbReference>
<dbReference type="STRING" id="4932.YJR013W"/>
<dbReference type="CAZy" id="GT50">
    <property type="family name" value="Glycosyltransferase Family 50"/>
</dbReference>
<dbReference type="iPTMnet" id="P47088"/>
<dbReference type="PaxDb" id="4932-YJR013W"/>
<dbReference type="PeptideAtlas" id="P47088"/>
<dbReference type="EnsemblFungi" id="YJR013W_mRNA">
    <property type="protein sequence ID" value="YJR013W"/>
    <property type="gene ID" value="YJR013W"/>
</dbReference>
<dbReference type="GeneID" id="853470"/>
<dbReference type="KEGG" id="sce:YJR013W"/>
<dbReference type="AGR" id="SGD:S000003774"/>
<dbReference type="SGD" id="S000003774">
    <property type="gene designation" value="GPI14"/>
</dbReference>
<dbReference type="VEuPathDB" id="FungiDB:YJR013W"/>
<dbReference type="eggNOG" id="KOG3893">
    <property type="taxonomic scope" value="Eukaryota"/>
</dbReference>
<dbReference type="GeneTree" id="ENSGT00390000017728"/>
<dbReference type="HOGENOM" id="CLU_024220_1_0_1"/>
<dbReference type="InParanoid" id="P47088"/>
<dbReference type="OMA" id="LINCWIL"/>
<dbReference type="OrthoDB" id="1741594at2759"/>
<dbReference type="BioCyc" id="YEAST:G3O-31658-MONOMER"/>
<dbReference type="UniPathway" id="UPA00196"/>
<dbReference type="BioGRID-ORCS" id="853470">
    <property type="hits" value="7 hits in 10 CRISPR screens"/>
</dbReference>
<dbReference type="PRO" id="PR:P47088"/>
<dbReference type="Proteomes" id="UP000002311">
    <property type="component" value="Chromosome X"/>
</dbReference>
<dbReference type="RNAct" id="P47088">
    <property type="molecule type" value="protein"/>
</dbReference>
<dbReference type="GO" id="GO:0005783">
    <property type="term" value="C:endoplasmic reticulum"/>
    <property type="evidence" value="ECO:0007005"/>
    <property type="project" value="SGD"/>
</dbReference>
<dbReference type="GO" id="GO:0005789">
    <property type="term" value="C:endoplasmic reticulum membrane"/>
    <property type="evidence" value="ECO:0000303"/>
    <property type="project" value="ComplexPortal"/>
</dbReference>
<dbReference type="GO" id="GO:1990529">
    <property type="term" value="C:glycosylphosphatidylinositol-mannosyltransferase I complex"/>
    <property type="evidence" value="ECO:0000353"/>
    <property type="project" value="SGD"/>
</dbReference>
<dbReference type="GO" id="GO:0051751">
    <property type="term" value="F:alpha-1,4-mannosyltransferase activity"/>
    <property type="evidence" value="ECO:0007669"/>
    <property type="project" value="InterPro"/>
</dbReference>
<dbReference type="GO" id="GO:0004376">
    <property type="term" value="F:glycolipid mannosyltransferase activity"/>
    <property type="evidence" value="ECO:0007669"/>
    <property type="project" value="InterPro"/>
</dbReference>
<dbReference type="GO" id="GO:0031505">
    <property type="term" value="P:fungal-type cell wall organization"/>
    <property type="evidence" value="ECO:0000315"/>
    <property type="project" value="SGD"/>
</dbReference>
<dbReference type="GO" id="GO:0006506">
    <property type="term" value="P:GPI anchor biosynthetic process"/>
    <property type="evidence" value="ECO:0000315"/>
    <property type="project" value="SGD"/>
</dbReference>
<dbReference type="GO" id="GO:0035268">
    <property type="term" value="P:protein mannosylation"/>
    <property type="evidence" value="ECO:0000303"/>
    <property type="project" value="ComplexPortal"/>
</dbReference>
<dbReference type="InterPro" id="IPR007704">
    <property type="entry name" value="PIG-M"/>
</dbReference>
<dbReference type="PANTHER" id="PTHR12886:SF0">
    <property type="entry name" value="GPI MANNOSYLTRANSFERASE 1"/>
    <property type="match status" value="1"/>
</dbReference>
<dbReference type="PANTHER" id="PTHR12886">
    <property type="entry name" value="PIG-M MANNOSYLTRANSFERASE"/>
    <property type="match status" value="1"/>
</dbReference>
<dbReference type="Pfam" id="PF05007">
    <property type="entry name" value="Mannosyl_trans"/>
    <property type="match status" value="1"/>
</dbReference>
<keyword id="KW-0961">Cell wall biogenesis/degradation</keyword>
<keyword id="KW-0256">Endoplasmic reticulum</keyword>
<keyword id="KW-0328">Glycosyltransferase</keyword>
<keyword id="KW-0337">GPI-anchor biosynthesis</keyword>
<keyword id="KW-0472">Membrane</keyword>
<keyword id="KW-1185">Reference proteome</keyword>
<keyword id="KW-0808">Transferase</keyword>
<keyword id="KW-0812">Transmembrane</keyword>
<keyword id="KW-1133">Transmembrane helix</keyword>
<name>GPI14_YEAST</name>
<organism>
    <name type="scientific">Saccharomyces cerevisiae (strain ATCC 204508 / S288c)</name>
    <name type="common">Baker's yeast</name>
    <dbReference type="NCBI Taxonomy" id="559292"/>
    <lineage>
        <taxon>Eukaryota</taxon>
        <taxon>Fungi</taxon>
        <taxon>Dikarya</taxon>
        <taxon>Ascomycota</taxon>
        <taxon>Saccharomycotina</taxon>
        <taxon>Saccharomycetes</taxon>
        <taxon>Saccharomycetales</taxon>
        <taxon>Saccharomycetaceae</taxon>
        <taxon>Saccharomyces</taxon>
    </lineage>
</organism>
<feature type="chain" id="PRO_0000203084" description="GPI mannosyltransferase 1">
    <location>
        <begin position="1"/>
        <end position="403"/>
    </location>
</feature>
<feature type="topological domain" description="Cytoplasmic" evidence="1">
    <location>
        <begin position="1"/>
        <end position="4"/>
    </location>
</feature>
<feature type="transmembrane region" description="Helical" evidence="1">
    <location>
        <begin position="5"/>
        <end position="25"/>
    </location>
</feature>
<feature type="topological domain" description="Lumenal" evidence="1">
    <location>
        <begin position="26"/>
        <end position="78"/>
    </location>
</feature>
<feature type="transmembrane region" description="Helical" evidence="1">
    <location>
        <begin position="79"/>
        <end position="99"/>
    </location>
</feature>
<feature type="topological domain" description="Cytoplasmic" evidence="1">
    <location>
        <begin position="100"/>
        <end position="110"/>
    </location>
</feature>
<feature type="transmembrane region" description="Helical" evidence="1">
    <location>
        <begin position="111"/>
        <end position="131"/>
    </location>
</feature>
<feature type="topological domain" description="Lumenal" evidence="1">
    <location>
        <position position="132"/>
    </location>
</feature>
<feature type="transmembrane region" description="Helical" evidence="1">
    <location>
        <begin position="133"/>
        <end position="149"/>
    </location>
</feature>
<feature type="topological domain" description="Cytoplasmic" evidence="1">
    <location>
        <begin position="150"/>
        <end position="160"/>
    </location>
</feature>
<feature type="transmembrane region" description="Helical" evidence="1">
    <location>
        <begin position="161"/>
        <end position="181"/>
    </location>
</feature>
<feature type="topological domain" description="Lumenal" evidence="1">
    <location>
        <begin position="182"/>
        <end position="193"/>
    </location>
</feature>
<feature type="transmembrane region" description="Helical" evidence="1">
    <location>
        <begin position="194"/>
        <end position="214"/>
    </location>
</feature>
<feature type="topological domain" description="Cytoplasmic" evidence="1">
    <location>
        <begin position="215"/>
        <end position="266"/>
    </location>
</feature>
<feature type="transmembrane region" description="Helical" evidence="1">
    <location>
        <begin position="267"/>
        <end position="287"/>
    </location>
</feature>
<feature type="topological domain" description="Lumenal" evidence="1">
    <location>
        <begin position="288"/>
        <end position="310"/>
    </location>
</feature>
<feature type="transmembrane region" description="Helical" evidence="1">
    <location>
        <begin position="311"/>
        <end position="331"/>
    </location>
</feature>
<feature type="topological domain" description="Cytoplasmic" evidence="1">
    <location>
        <begin position="332"/>
        <end position="334"/>
    </location>
</feature>
<feature type="transmembrane region" description="Helical" evidence="1">
    <location>
        <begin position="335"/>
        <end position="355"/>
    </location>
</feature>
<feature type="topological domain" description="Lumenal" evidence="1">
    <location>
        <begin position="356"/>
        <end position="361"/>
    </location>
</feature>
<feature type="transmembrane region" description="Helical" evidence="1">
    <location>
        <begin position="362"/>
        <end position="382"/>
    </location>
</feature>
<feature type="topological domain" description="Cytoplasmic" evidence="1">
    <location>
        <begin position="383"/>
        <end position="403"/>
    </location>
</feature>
<evidence type="ECO:0000255" key="1"/>
<evidence type="ECO:0000269" key="2">
    <source>
    </source>
</evidence>
<evidence type="ECO:0000269" key="3">
    <source>
    </source>
</evidence>
<evidence type="ECO:0000305" key="4"/>
<protein>
    <recommendedName>
        <fullName>GPI mannosyltransferase 1</fullName>
        <ecNumber>2.4.1.-</ecNumber>
    </recommendedName>
    <alternativeName>
        <fullName>GPI mannosyltransferase I</fullName>
        <shortName>GPI-MT-I</shortName>
    </alternativeName>
    <alternativeName>
        <fullName>Glycosylphosphatidylinositol-anchor biosynthesis protein 14</fullName>
    </alternativeName>
</protein>
<reference key="1">
    <citation type="journal article" date="1996" name="EMBO J.">
        <title>Complete nucleotide sequence of Saccharomyces cerevisiae chromosome X.</title>
        <authorList>
            <person name="Galibert F."/>
            <person name="Alexandraki D."/>
            <person name="Baur A."/>
            <person name="Boles E."/>
            <person name="Chalwatzis N."/>
            <person name="Chuat J.-C."/>
            <person name="Coster F."/>
            <person name="Cziepluch C."/>
            <person name="de Haan M."/>
            <person name="Domdey H."/>
            <person name="Durand P."/>
            <person name="Entian K.-D."/>
            <person name="Gatius M."/>
            <person name="Goffeau A."/>
            <person name="Grivell L.A."/>
            <person name="Hennemann A."/>
            <person name="Herbert C.J."/>
            <person name="Heumann K."/>
            <person name="Hilger F."/>
            <person name="Hollenberg C.P."/>
            <person name="Huang M.-E."/>
            <person name="Jacq C."/>
            <person name="Jauniaux J.-C."/>
            <person name="Katsoulou C."/>
            <person name="Kirchrath L."/>
            <person name="Kleine K."/>
            <person name="Kordes E."/>
            <person name="Koetter P."/>
            <person name="Liebl S."/>
            <person name="Louis E.J."/>
            <person name="Manus V."/>
            <person name="Mewes H.-W."/>
            <person name="Miosga T."/>
            <person name="Obermaier B."/>
            <person name="Perea J."/>
            <person name="Pohl T.M."/>
            <person name="Portetelle D."/>
            <person name="Pujol A."/>
            <person name="Purnelle B."/>
            <person name="Ramezani Rad M."/>
            <person name="Rasmussen S.W."/>
            <person name="Rose M."/>
            <person name="Rossau R."/>
            <person name="Schaaff-Gerstenschlaeger I."/>
            <person name="Smits P.H.M."/>
            <person name="Scarcez T."/>
            <person name="Soriano N."/>
            <person name="To Van D."/>
            <person name="Tzermia M."/>
            <person name="Van Broekhoven A."/>
            <person name="Vandenbol M."/>
            <person name="Wedler H."/>
            <person name="von Wettstein D."/>
            <person name="Wambutt R."/>
            <person name="Zagulski M."/>
            <person name="Zollner A."/>
            <person name="Karpfinger-Hartl L."/>
        </authorList>
    </citation>
    <scope>NUCLEOTIDE SEQUENCE [LARGE SCALE GENOMIC DNA]</scope>
    <source>
        <strain>ATCC 204508 / S288c</strain>
    </source>
</reference>
<reference key="2">
    <citation type="journal article" date="2014" name="G3 (Bethesda)">
        <title>The reference genome sequence of Saccharomyces cerevisiae: Then and now.</title>
        <authorList>
            <person name="Engel S.R."/>
            <person name="Dietrich F.S."/>
            <person name="Fisk D.G."/>
            <person name="Binkley G."/>
            <person name="Balakrishnan R."/>
            <person name="Costanzo M.C."/>
            <person name="Dwight S.S."/>
            <person name="Hitz B.C."/>
            <person name="Karra K."/>
            <person name="Nash R.S."/>
            <person name="Weng S."/>
            <person name="Wong E.D."/>
            <person name="Lloyd P."/>
            <person name="Skrzypek M.S."/>
            <person name="Miyasato S.R."/>
            <person name="Simison M."/>
            <person name="Cherry J.M."/>
        </authorList>
    </citation>
    <scope>GENOME REANNOTATION</scope>
    <source>
        <strain>ATCC 204508 / S288c</strain>
    </source>
</reference>
<reference key="3">
    <citation type="journal article" date="2003" name="Genome Biol.">
        <title>Reinvestigation of the Saccharomyces cerevisiae genome annotation by comparison to the genome of a related fungus: Ashbya gossypii.</title>
        <authorList>
            <person name="Brachat S."/>
            <person name="Dietrich F.S."/>
            <person name="Voegeli S."/>
            <person name="Zhang Z."/>
            <person name="Stuart L."/>
            <person name="Lerch A."/>
            <person name="Gates K."/>
            <person name="Gaffney T.D."/>
            <person name="Philippsen P."/>
        </authorList>
    </citation>
    <scope>NUCLEOTIDE SEQUENCE [GENOMIC DNA] OF 14-73</scope>
    <scope>IDENTIFICATION OF FRAMESHIFT</scope>
    <source>
        <strain>ATCC 204511 / S288c / AB972</strain>
    </source>
</reference>
<reference key="4">
    <citation type="journal article" date="2007" name="Genome Res.">
        <title>Approaching a complete repository of sequence-verified protein-encoding clones for Saccharomyces cerevisiae.</title>
        <authorList>
            <person name="Hu Y."/>
            <person name="Rolfs A."/>
            <person name="Bhullar B."/>
            <person name="Murthy T.V.S."/>
            <person name="Zhu C."/>
            <person name="Berger M.F."/>
            <person name="Camargo A.A."/>
            <person name="Kelley F."/>
            <person name="McCarron S."/>
            <person name="Jepson D."/>
            <person name="Richardson A."/>
            <person name="Raphael J."/>
            <person name="Moreira D."/>
            <person name="Taycher E."/>
            <person name="Zuo D."/>
            <person name="Mohr S."/>
            <person name="Kane M.F."/>
            <person name="Williamson J."/>
            <person name="Simpson A.J.G."/>
            <person name="Bulyk M.L."/>
            <person name="Harlow E."/>
            <person name="Marsischky G."/>
            <person name="Kolodner R.D."/>
            <person name="LaBaer J."/>
        </authorList>
    </citation>
    <scope>NUCLEOTIDE SEQUENCE [GENOMIC DNA] OF 99-403</scope>
    <source>
        <strain>ATCC 204508 / S288c</strain>
    </source>
</reference>
<reference key="5">
    <citation type="journal article" date="2003" name="Nature">
        <title>Global analysis of protein localization in budding yeast.</title>
        <authorList>
            <person name="Huh W.-K."/>
            <person name="Falvo J.V."/>
            <person name="Gerke L.C."/>
            <person name="Carroll A.S."/>
            <person name="Howson R.W."/>
            <person name="Weissman J.S."/>
            <person name="O'Shea E.K."/>
        </authorList>
    </citation>
    <scope>SUBCELLULAR LOCATION [LARGE SCALE ANALYSIS]</scope>
</reference>
<reference key="6">
    <citation type="journal article" date="2005" name="Yeast">
        <title>Characterization of GPI14/YJR013w mutation that induces the cell wall integrity signalling pathway and results in increased protein production in Saccharomyces cerevisiae.</title>
        <authorList>
            <person name="Davydenko S.G."/>
            <person name="Feng D."/>
            <person name="Jaentti J."/>
            <person name="Keraenen S."/>
        </authorList>
    </citation>
    <scope>FUNCTION</scope>
</reference>
<reference key="7">
    <citation type="journal article" date="2006" name="Proc. Natl. Acad. Sci. U.S.A.">
        <title>A global topology map of the Saccharomyces cerevisiae membrane proteome.</title>
        <authorList>
            <person name="Kim H."/>
            <person name="Melen K."/>
            <person name="Oesterberg M."/>
            <person name="von Heijne G."/>
        </authorList>
    </citation>
    <scope>TOPOLOGY [LARGE SCALE ANALYSIS]</scope>
    <source>
        <strain>ATCC 208353 / W303-1A</strain>
    </source>
</reference>
<comment type="function">
    <text evidence="3">Mannosyltransferase involved in glycosylphosphatidylinositol-anchor biosynthesis. Transfers the first alpha-1,4-mannose to GlcN-acyl-PI during GPI precursor assembly. Required for cell wall integrity.</text>
</comment>
<comment type="pathway">
    <text>Glycolipid biosynthesis; glycosylphosphatidylinositol-anchor biosynthesis.</text>
</comment>
<comment type="subcellular location">
    <subcellularLocation>
        <location evidence="2">Endoplasmic reticulum membrane</location>
        <topology evidence="2">Multi-pass membrane protein</topology>
    </subcellularLocation>
</comment>
<comment type="similarity">
    <text evidence="4">Belongs to the PIGM family.</text>
</comment>
<comment type="sequence caution" evidence="4">
    <conflict type="frameshift">
        <sequence resource="EMBL-CDS" id="CAA60935"/>
    </conflict>
</comment>
<comment type="sequence caution" evidence="4">
    <conflict type="frameshift">
        <sequence resource="EMBL-CDS" id="CAA89537"/>
    </conflict>
</comment>
<proteinExistence type="evidence at protein level"/>
<accession>P47088</accession>
<accession>D6VWI9</accession>
<accession>E9P8R4</accession>